<comment type="function">
    <text>The muscarinic acetylcholine receptor mediates various cellular responses, including inhibition of adenylate cyclase, breakdown of phosphoinositides and modulation of potassium channels through the action of G proteins. Primary transducing effect is Pi turnover.</text>
</comment>
<comment type="subcellular location">
    <subcellularLocation>
        <location>Cell membrane</location>
        <topology>Multi-pass membrane protein</topology>
    </subcellularLocation>
</comment>
<comment type="alternative products">
    <event type="alternative splicing"/>
    <isoform>
        <id>Q18007-1</id>
        <name>B</name>
        <name>A</name>
        <name>Large</name>
        <sequence type="displayed"/>
    </isoform>
    <isoform>
        <id>Q18007-2</id>
        <name>A</name>
        <name>B</name>
        <name>Medium</name>
        <sequence type="described" ref="VSP_001860"/>
    </isoform>
    <isoform>
        <id>Q18007-3</id>
        <name>C</name>
        <name>Small</name>
        <sequence type="described" ref="VSP_001860 VSP_001861"/>
    </isoform>
</comment>
<comment type="tissue specificity">
    <text evidence="5">Expressed in head region of the larva. In adults, expression is seen in the periventricularis magnocellularis (PVM) neuron.</text>
</comment>
<comment type="developmental stage">
    <text>Expressed throughout development from embryonic to adult stage, highest level seen in early larvae. Isoform A is the most abundant and isoform C is the least.</text>
</comment>
<comment type="similarity">
    <text evidence="3">Belongs to the G-protein coupled receptor 1 family. Muscarinic acetylcholine receptor subfamily.</text>
</comment>
<feature type="chain" id="PRO_0000069048" description="Probable muscarinic acetylcholine receptor gar-1">
    <location>
        <begin position="1"/>
        <end position="713"/>
    </location>
</feature>
<feature type="topological domain" description="Extracellular" evidence="1">
    <location>
        <begin position="1"/>
        <end position="20"/>
    </location>
</feature>
<feature type="transmembrane region" description="Helical; Name=1" evidence="1">
    <location>
        <begin position="21"/>
        <end position="41"/>
    </location>
</feature>
<feature type="topological domain" description="Cytoplasmic" evidence="1">
    <location>
        <begin position="42"/>
        <end position="66"/>
    </location>
</feature>
<feature type="transmembrane region" description="Helical; Name=2" evidence="1">
    <location>
        <begin position="67"/>
        <end position="87"/>
    </location>
</feature>
<feature type="topological domain" description="Extracellular" evidence="1">
    <location>
        <begin position="88"/>
        <end position="101"/>
    </location>
</feature>
<feature type="transmembrane region" description="Helical; Name=3" evidence="1">
    <location>
        <begin position="102"/>
        <end position="122"/>
    </location>
</feature>
<feature type="topological domain" description="Cytoplasmic" evidence="1">
    <location>
        <begin position="123"/>
        <end position="144"/>
    </location>
</feature>
<feature type="transmembrane region" description="Helical; Name=4" evidence="1">
    <location>
        <begin position="145"/>
        <end position="165"/>
    </location>
</feature>
<feature type="topological domain" description="Extracellular" evidence="1">
    <location>
        <begin position="166"/>
        <end position="189"/>
    </location>
</feature>
<feature type="transmembrane region" description="Helical; Name=5" evidence="1">
    <location>
        <begin position="190"/>
        <end position="210"/>
    </location>
</feature>
<feature type="topological domain" description="Cytoplasmic" evidence="1">
    <location>
        <begin position="211"/>
        <end position="633"/>
    </location>
</feature>
<feature type="transmembrane region" description="Helical; Name=6" evidence="1">
    <location>
        <begin position="634"/>
        <end position="656"/>
    </location>
</feature>
<feature type="topological domain" description="Extracellular" evidence="1">
    <location>
        <begin position="657"/>
        <end position="670"/>
    </location>
</feature>
<feature type="transmembrane region" description="Helical; Name=7" evidence="1">
    <location>
        <begin position="671"/>
        <end position="693"/>
    </location>
</feature>
<feature type="topological domain" description="Cytoplasmic" evidence="1">
    <location>
        <begin position="694"/>
        <end position="713"/>
    </location>
</feature>
<feature type="region of interest" description="Disordered" evidence="4">
    <location>
        <begin position="256"/>
        <end position="350"/>
    </location>
</feature>
<feature type="region of interest" description="Disordered" evidence="4">
    <location>
        <begin position="381"/>
        <end position="403"/>
    </location>
</feature>
<feature type="region of interest" description="Disordered" evidence="4">
    <location>
        <begin position="427"/>
        <end position="475"/>
    </location>
</feature>
<feature type="region of interest" description="Disordered" evidence="4">
    <location>
        <begin position="515"/>
        <end position="585"/>
    </location>
</feature>
<feature type="compositionally biased region" description="Polar residues" evidence="4">
    <location>
        <begin position="266"/>
        <end position="275"/>
    </location>
</feature>
<feature type="compositionally biased region" description="Polar residues" evidence="4">
    <location>
        <begin position="287"/>
        <end position="315"/>
    </location>
</feature>
<feature type="compositionally biased region" description="Basic and acidic residues" evidence="4">
    <location>
        <begin position="320"/>
        <end position="333"/>
    </location>
</feature>
<feature type="compositionally biased region" description="Basic and acidic residues" evidence="4">
    <location>
        <begin position="393"/>
        <end position="403"/>
    </location>
</feature>
<feature type="compositionally biased region" description="Low complexity" evidence="4">
    <location>
        <begin position="429"/>
        <end position="439"/>
    </location>
</feature>
<feature type="compositionally biased region" description="Basic residues" evidence="4">
    <location>
        <begin position="444"/>
        <end position="457"/>
    </location>
</feature>
<feature type="compositionally biased region" description="Polar residues" evidence="4">
    <location>
        <begin position="557"/>
        <end position="571"/>
    </location>
</feature>
<feature type="glycosylation site" description="N-linked (GlcNAc...) asparagine" evidence="2">
    <location>
        <position position="3"/>
    </location>
</feature>
<feature type="disulfide bond" evidence="3">
    <location>
        <begin position="99"/>
        <end position="180"/>
    </location>
</feature>
<feature type="splice variant" id="VSP_001860" description="In isoform A and isoform C." evidence="6">
    <location>
        <begin position="275"/>
        <end position="305"/>
    </location>
</feature>
<feature type="splice variant" id="VSP_001861" description="In isoform C." evidence="7">
    <original>DDSSSEVEGEEKPEVRNNGLKIPQLTVNNENRGETSSQPGRDRLAPPNKTDTFLSASGVSR</original>
    <variation>E</variation>
    <location>
        <begin position="533"/>
        <end position="593"/>
    </location>
</feature>
<proteinExistence type="evidence at transcript level"/>
<gene>
    <name type="primary">gar-1</name>
    <name type="ORF">C15B12.5</name>
</gene>
<organism>
    <name type="scientific">Caenorhabditis elegans</name>
    <dbReference type="NCBI Taxonomy" id="6239"/>
    <lineage>
        <taxon>Eukaryota</taxon>
        <taxon>Metazoa</taxon>
        <taxon>Ecdysozoa</taxon>
        <taxon>Nematoda</taxon>
        <taxon>Chromadorea</taxon>
        <taxon>Rhabditida</taxon>
        <taxon>Rhabditina</taxon>
        <taxon>Rhabditomorpha</taxon>
        <taxon>Rhabditoidea</taxon>
        <taxon>Rhabditidae</taxon>
        <taxon>Peloderinae</taxon>
        <taxon>Caenorhabditis</taxon>
    </lineage>
</organism>
<evidence type="ECO:0000250" key="1"/>
<evidence type="ECO:0000255" key="2"/>
<evidence type="ECO:0000255" key="3">
    <source>
        <dbReference type="PROSITE-ProRule" id="PRU00521"/>
    </source>
</evidence>
<evidence type="ECO:0000256" key="4">
    <source>
        <dbReference type="SAM" id="MobiDB-lite"/>
    </source>
</evidence>
<evidence type="ECO:0000269" key="5">
    <source>
    </source>
</evidence>
<evidence type="ECO:0000303" key="6">
    <source>
    </source>
</evidence>
<evidence type="ECO:0000305" key="7"/>
<accession>Q18007</accession>
<accession>Q9NJS7</accession>
<accession>Q9NJS8</accession>
<accession>Q9XTK1</accession>
<sequence length="713" mass="80404">MPNYTVPPDPADTSWDSPYSIPVQIVVWIIIIVLSLETIIGNAMVVMAYRIERNISKQVSNRYIVSLAISDLIIGIEGFPFFTVYVLNGDRWPLGWVACQTWLFLDYTLCLVSILTVLLITADRYLSVCHTAKYLKWQSPTKTQLLIVMSWLLPAIIFGIMIYGWQAMTGQSTSMSGAECSAPFLSNPYVNMGMYVAYYWTTLVAMLILYKGIHQAAKNLEKKAKAKERRHIALILSQRLGTQVGVSLMLQSKAEKEKAEEAQKDSGYTSNQAGDANNLRRFGFSEPETSQFRVDPNSNNNLNVEGSLNTENDQNLGVIEEERSGFLSRRESNESYYPGPHPTAANSRRCSEMEKVSLLSESDGVPSTRPAKSYGRLSLRSRYSASESITTTHENDEKEVEKADSLQKLFADDELGSVLNFKEEKLKNTDSNNDSDTTSVILQRSRKYKKNKRPRSSRRSEHSTPRQIAKVKQAEGTAAQLIEESVPDDDQTETIEVKRTDRWVVSMKKRIARALIRRRSTTRPERGSSSNSDDSSSEVEGEEKPEVRNNGLKIPQLTVNNENRGETSSQPGRDRLAPPNKTDTFLSASGVSRKISTISTVITREKVISSIFAPIAVFNRGRKQTKAEKRAHKAFRTITFIVGFFAILWSPYYIMATVYGFCKGECIPSFLYTLSYYMCYLNSSGNPFAYALANRQFRSAFMRMFRGNFNKVA</sequence>
<dbReference type="EMBL" id="AF075245">
    <property type="protein sequence ID" value="AAD13747.1"/>
    <property type="molecule type" value="mRNA"/>
</dbReference>
<dbReference type="EMBL" id="AF117300">
    <property type="protein sequence ID" value="AAF26201.1"/>
    <property type="molecule type" value="mRNA"/>
</dbReference>
<dbReference type="EMBL" id="AF117301">
    <property type="protein sequence ID" value="AAF26202.1"/>
    <property type="molecule type" value="mRNA"/>
</dbReference>
<dbReference type="EMBL" id="FO080547">
    <property type="protein sequence ID" value="CCD64566.1"/>
    <property type="molecule type" value="Genomic_DNA"/>
</dbReference>
<dbReference type="EMBL" id="FO080547">
    <property type="protein sequence ID" value="CCD64567.1"/>
    <property type="molecule type" value="Genomic_DNA"/>
</dbReference>
<dbReference type="EMBL" id="FO080547">
    <property type="protein sequence ID" value="CCD64568.1"/>
    <property type="molecule type" value="Genomic_DNA"/>
</dbReference>
<dbReference type="PIR" id="T43292">
    <property type="entry name" value="T43292"/>
</dbReference>
<dbReference type="RefSeq" id="NP_001024401.1">
    <molecule id="Q18007-2"/>
    <property type="nucleotide sequence ID" value="NM_001029230.3"/>
</dbReference>
<dbReference type="RefSeq" id="NP_001024402.1">
    <molecule id="Q18007-1"/>
    <property type="nucleotide sequence ID" value="NM_001029231.3"/>
</dbReference>
<dbReference type="RefSeq" id="NP_001024403.1">
    <molecule id="Q18007-3"/>
    <property type="nucleotide sequence ID" value="NM_001029232.2"/>
</dbReference>
<dbReference type="SMR" id="Q18007"/>
<dbReference type="FunCoup" id="Q18007">
    <property type="interactions" value="134"/>
</dbReference>
<dbReference type="STRING" id="6239.C15B12.5b.1"/>
<dbReference type="GlyCosmos" id="Q18007">
    <property type="glycosylation" value="1 site, No reported glycans"/>
</dbReference>
<dbReference type="PaxDb" id="6239-C15B12.5b"/>
<dbReference type="EnsemblMetazoa" id="C15B12.5a.1">
    <molecule id="Q18007-2"/>
    <property type="protein sequence ID" value="C15B12.5a.1"/>
    <property type="gene ID" value="WBGene00001517"/>
</dbReference>
<dbReference type="EnsemblMetazoa" id="C15B12.5b.1">
    <molecule id="Q18007-1"/>
    <property type="protein sequence ID" value="C15B12.5b.1"/>
    <property type="gene ID" value="WBGene00001517"/>
</dbReference>
<dbReference type="EnsemblMetazoa" id="C15B12.5c.1">
    <molecule id="Q18007-3"/>
    <property type="protein sequence ID" value="C15B12.5c.1"/>
    <property type="gene ID" value="WBGene00001517"/>
</dbReference>
<dbReference type="GeneID" id="180922"/>
<dbReference type="KEGG" id="cel:CELE_C15B12.5"/>
<dbReference type="UCSC" id="C15B12.5c">
    <molecule id="Q18007-1"/>
    <property type="organism name" value="c. elegans"/>
</dbReference>
<dbReference type="AGR" id="WB:WBGene00001517"/>
<dbReference type="CTD" id="180922"/>
<dbReference type="WormBase" id="C15B12.5a">
    <molecule id="Q18007-2"/>
    <property type="protein sequence ID" value="CE29666"/>
    <property type="gene ID" value="WBGene00001517"/>
    <property type="gene designation" value="gar-1"/>
</dbReference>
<dbReference type="WormBase" id="C15B12.5b">
    <molecule id="Q18007-1"/>
    <property type="protein sequence ID" value="CE29667"/>
    <property type="gene ID" value="WBGene00001517"/>
    <property type="gene designation" value="gar-1"/>
</dbReference>
<dbReference type="WormBase" id="C15B12.5c">
    <molecule id="Q18007-3"/>
    <property type="protein sequence ID" value="CE29668"/>
    <property type="gene ID" value="WBGene00001517"/>
    <property type="gene designation" value="gar-1"/>
</dbReference>
<dbReference type="eggNOG" id="KOG3656">
    <property type="taxonomic scope" value="Eukaryota"/>
</dbReference>
<dbReference type="GeneTree" id="ENSGT00940000172795"/>
<dbReference type="InParanoid" id="Q18007"/>
<dbReference type="OMA" id="PYYIMAT"/>
<dbReference type="OrthoDB" id="10071887at2759"/>
<dbReference type="PhylomeDB" id="Q18007"/>
<dbReference type="PRO" id="PR:Q18007"/>
<dbReference type="Proteomes" id="UP000001940">
    <property type="component" value="Chromosome X"/>
</dbReference>
<dbReference type="Bgee" id="WBGene00001517">
    <property type="expression patterns" value="Expressed in larva and 3 other cell types or tissues"/>
</dbReference>
<dbReference type="ExpressionAtlas" id="Q18007">
    <property type="expression patterns" value="baseline and differential"/>
</dbReference>
<dbReference type="GO" id="GO:0030425">
    <property type="term" value="C:dendrite"/>
    <property type="evidence" value="ECO:0000318"/>
    <property type="project" value="GO_Central"/>
</dbReference>
<dbReference type="GO" id="GO:0005886">
    <property type="term" value="C:plasma membrane"/>
    <property type="evidence" value="ECO:0000318"/>
    <property type="project" value="GO_Central"/>
</dbReference>
<dbReference type="GO" id="GO:0045211">
    <property type="term" value="C:postsynaptic membrane"/>
    <property type="evidence" value="ECO:0000314"/>
    <property type="project" value="WormBase"/>
</dbReference>
<dbReference type="GO" id="GO:0045202">
    <property type="term" value="C:synapse"/>
    <property type="evidence" value="ECO:0000318"/>
    <property type="project" value="GO_Central"/>
</dbReference>
<dbReference type="GO" id="GO:0016907">
    <property type="term" value="F:G protein-coupled acetylcholine receptor activity"/>
    <property type="evidence" value="ECO:0000314"/>
    <property type="project" value="WormBase"/>
</dbReference>
<dbReference type="GO" id="GO:0007197">
    <property type="term" value="P:adenylate cyclase-inhibiting G protein-coupled acetylcholine receptor signaling pathway"/>
    <property type="evidence" value="ECO:0000318"/>
    <property type="project" value="GO_Central"/>
</dbReference>
<dbReference type="GO" id="GO:0007268">
    <property type="term" value="P:chemical synaptic transmission"/>
    <property type="evidence" value="ECO:0000318"/>
    <property type="project" value="GO_Central"/>
</dbReference>
<dbReference type="GO" id="GO:0007187">
    <property type="term" value="P:G protein-coupled receptor signaling pathway, coupled to cyclic nucleotide second messenger"/>
    <property type="evidence" value="ECO:0000318"/>
    <property type="project" value="GO_Central"/>
</dbReference>
<dbReference type="GO" id="GO:0007271">
    <property type="term" value="P:synaptic transmission, cholinergic"/>
    <property type="evidence" value="ECO:0000314"/>
    <property type="project" value="WormBase"/>
</dbReference>
<dbReference type="CDD" id="cd15302">
    <property type="entry name" value="7tmA_mAChR_GAR-2-like"/>
    <property type="match status" value="1"/>
</dbReference>
<dbReference type="FunFam" id="1.20.1070.10:FF:000365">
    <property type="entry name" value="Muscarinic acetylcholine receptor gar-2"/>
    <property type="match status" value="1"/>
</dbReference>
<dbReference type="Gene3D" id="1.20.1070.10">
    <property type="entry name" value="Rhodopsin 7-helix transmembrane proteins"/>
    <property type="match status" value="2"/>
</dbReference>
<dbReference type="InterPro" id="IPR000276">
    <property type="entry name" value="GPCR_Rhodpsn"/>
</dbReference>
<dbReference type="InterPro" id="IPR017452">
    <property type="entry name" value="GPCR_Rhodpsn_7TM"/>
</dbReference>
<dbReference type="InterPro" id="IPR000995">
    <property type="entry name" value="Musac_Ach_rcpt"/>
</dbReference>
<dbReference type="PANTHER" id="PTHR24247">
    <property type="entry name" value="5-HYDROXYTRYPTAMINE RECEPTOR"/>
    <property type="match status" value="1"/>
</dbReference>
<dbReference type="PANTHER" id="PTHR24247:SF184">
    <property type="entry name" value="MUSCARINIC ACETYLCHOLINE RECEPTOR GAR-1-RELATED"/>
    <property type="match status" value="1"/>
</dbReference>
<dbReference type="Pfam" id="PF00001">
    <property type="entry name" value="7tm_1"/>
    <property type="match status" value="2"/>
</dbReference>
<dbReference type="PRINTS" id="PR00237">
    <property type="entry name" value="GPCRRHODOPSN"/>
</dbReference>
<dbReference type="PRINTS" id="PR00243">
    <property type="entry name" value="MUSCARINICR"/>
</dbReference>
<dbReference type="SUPFAM" id="SSF81321">
    <property type="entry name" value="Family A G protein-coupled receptor-like"/>
    <property type="match status" value="1"/>
</dbReference>
<dbReference type="PROSITE" id="PS00237">
    <property type="entry name" value="G_PROTEIN_RECEP_F1_1"/>
    <property type="match status" value="1"/>
</dbReference>
<dbReference type="PROSITE" id="PS50262">
    <property type="entry name" value="G_PROTEIN_RECEP_F1_2"/>
    <property type="match status" value="1"/>
</dbReference>
<protein>
    <recommendedName>
        <fullName>Probable muscarinic acetylcholine receptor gar-1</fullName>
    </recommendedName>
    <alternativeName>
        <fullName>G-protein-linked acetylcholine receptor 1</fullName>
    </alternativeName>
</protein>
<name>ACM1_CAEEL</name>
<reference key="1">
    <citation type="journal article" date="1999" name="J. Neurochem.">
        <title>Cloning and expression of a G protein-linked acetylcholine receptor from Caenorhabditis elegans.</title>
        <authorList>
            <person name="Lee Y.-S."/>
            <person name="Park Y.-S."/>
            <person name="Chang D.-J."/>
            <person name="Hwang J.M."/>
            <person name="Min C.K."/>
            <person name="Kaang B.-K."/>
            <person name="Cho N.J."/>
        </authorList>
    </citation>
    <scope>NUCLEOTIDE SEQUENCE [MRNA] (ISOFORM A)</scope>
    <source>
        <strain>Bristol N2</strain>
    </source>
</reference>
<reference key="2">
    <citation type="journal article" date="2000" name="Biochem. Biophys. Res. Commun.">
        <title>Alternative splicing of gar-1, a Caenorhabditis elegans G-protein-linked acetylcholine receptor gene.</title>
        <authorList>
            <person name="Park Y.-S."/>
            <person name="Lee Y.-S."/>
            <person name="Cho N.J."/>
            <person name="Kaang B.-K."/>
        </authorList>
    </citation>
    <scope>NUCLEOTIDE SEQUENCE [MRNA]</scope>
    <scope>ALTERNATIVE SPLICING (ISOFORMS B AND C)</scope>
    <source>
        <strain>Bristol N2</strain>
    </source>
</reference>
<reference key="3">
    <citation type="journal article" date="1998" name="Science">
        <title>Genome sequence of the nematode C. elegans: a platform for investigating biology.</title>
        <authorList>
            <consortium name="The C. elegans sequencing consortium"/>
        </authorList>
    </citation>
    <scope>NUCLEOTIDE SEQUENCE [LARGE SCALE GENOMIC DNA]</scope>
    <source>
        <strain>Bristol N2</strain>
    </source>
</reference>
<reference key="4">
    <citation type="journal article" date="2000" name="J. Neurochem.">
        <title>Characterization of GAR-2, a novel G protein-linked acetylcholine receptor from Caenorhabditis elegans.</title>
        <authorList>
            <person name="Lee Y.-S."/>
            <person name="Park Y.-S."/>
            <person name="Nam S."/>
            <person name="Suh S.J."/>
            <person name="Lee J."/>
            <person name="Kaang B.-K."/>
            <person name="Cho N.J."/>
        </authorList>
    </citation>
    <scope>TISSUE SPECIFICITY</scope>
</reference>
<keyword id="KW-0025">Alternative splicing</keyword>
<keyword id="KW-1003">Cell membrane</keyword>
<keyword id="KW-1015">Disulfide bond</keyword>
<keyword id="KW-0297">G-protein coupled receptor</keyword>
<keyword id="KW-0325">Glycoprotein</keyword>
<keyword id="KW-0472">Membrane</keyword>
<keyword id="KW-0675">Receptor</keyword>
<keyword id="KW-1185">Reference proteome</keyword>
<keyword id="KW-0807">Transducer</keyword>
<keyword id="KW-0812">Transmembrane</keyword>
<keyword id="KW-1133">Transmembrane helix</keyword>